<gene>
    <name evidence="2" type="primary">argF</name>
    <name type="ordered locus">STH3019</name>
</gene>
<accession>Q67JZ8</accession>
<evidence type="ECO:0000250" key="1"/>
<evidence type="ECO:0000255" key="2">
    <source>
        <dbReference type="HAMAP-Rule" id="MF_01109"/>
    </source>
</evidence>
<organism>
    <name type="scientific">Symbiobacterium thermophilum (strain DSM 24528 / JCM 14929 / IAM 14863 / T)</name>
    <dbReference type="NCBI Taxonomy" id="292459"/>
    <lineage>
        <taxon>Bacteria</taxon>
        <taxon>Bacillati</taxon>
        <taxon>Bacillota</taxon>
        <taxon>Clostridia</taxon>
        <taxon>Eubacteriales</taxon>
        <taxon>Symbiobacteriaceae</taxon>
        <taxon>Symbiobacterium</taxon>
    </lineage>
</organism>
<proteinExistence type="inferred from homology"/>
<name>OTC_SYMTH</name>
<feature type="chain" id="PRO_0000113044" description="Ornithine carbamoyltransferase">
    <location>
        <begin position="1"/>
        <end position="310"/>
    </location>
</feature>
<feature type="binding site" evidence="2">
    <location>
        <begin position="56"/>
        <end position="59"/>
    </location>
    <ligand>
        <name>carbamoyl phosphate</name>
        <dbReference type="ChEBI" id="CHEBI:58228"/>
    </ligand>
</feature>
<feature type="binding site" evidence="2">
    <location>
        <position position="83"/>
    </location>
    <ligand>
        <name>carbamoyl phosphate</name>
        <dbReference type="ChEBI" id="CHEBI:58228"/>
    </ligand>
</feature>
<feature type="binding site" evidence="2">
    <location>
        <position position="107"/>
    </location>
    <ligand>
        <name>carbamoyl phosphate</name>
        <dbReference type="ChEBI" id="CHEBI:58228"/>
    </ligand>
</feature>
<feature type="binding site" evidence="2">
    <location>
        <begin position="134"/>
        <end position="137"/>
    </location>
    <ligand>
        <name>carbamoyl phosphate</name>
        <dbReference type="ChEBI" id="CHEBI:58228"/>
    </ligand>
</feature>
<feature type="binding site" evidence="2">
    <location>
        <position position="165"/>
    </location>
    <ligand>
        <name>L-ornithine</name>
        <dbReference type="ChEBI" id="CHEBI:46911"/>
    </ligand>
</feature>
<feature type="binding site" evidence="2">
    <location>
        <position position="229"/>
    </location>
    <ligand>
        <name>L-ornithine</name>
        <dbReference type="ChEBI" id="CHEBI:46911"/>
    </ligand>
</feature>
<feature type="binding site" evidence="2">
    <location>
        <begin position="233"/>
        <end position="234"/>
    </location>
    <ligand>
        <name>L-ornithine</name>
        <dbReference type="ChEBI" id="CHEBI:46911"/>
    </ligand>
</feature>
<feature type="binding site" evidence="2">
    <location>
        <begin position="269"/>
        <end position="270"/>
    </location>
    <ligand>
        <name>carbamoyl phosphate</name>
        <dbReference type="ChEBI" id="CHEBI:58228"/>
    </ligand>
</feature>
<feature type="binding site" evidence="2">
    <location>
        <position position="297"/>
    </location>
    <ligand>
        <name>carbamoyl phosphate</name>
        <dbReference type="ChEBI" id="CHEBI:58228"/>
    </ligand>
</feature>
<dbReference type="EC" id="2.1.3.3" evidence="2"/>
<dbReference type="EMBL" id="AP006840">
    <property type="protein sequence ID" value="BAD42002.1"/>
    <property type="molecule type" value="Genomic_DNA"/>
</dbReference>
<dbReference type="RefSeq" id="WP_011197134.1">
    <property type="nucleotide sequence ID" value="NC_006177.1"/>
</dbReference>
<dbReference type="SMR" id="Q67JZ8"/>
<dbReference type="STRING" id="292459.STH3019"/>
<dbReference type="KEGG" id="sth:STH3019"/>
<dbReference type="eggNOG" id="COG0078">
    <property type="taxonomic scope" value="Bacteria"/>
</dbReference>
<dbReference type="HOGENOM" id="CLU_043846_3_2_9"/>
<dbReference type="OrthoDB" id="9802587at2"/>
<dbReference type="UniPathway" id="UPA00068">
    <property type="reaction ID" value="UER00112"/>
</dbReference>
<dbReference type="Proteomes" id="UP000000417">
    <property type="component" value="Chromosome"/>
</dbReference>
<dbReference type="GO" id="GO:0005737">
    <property type="term" value="C:cytoplasm"/>
    <property type="evidence" value="ECO:0007669"/>
    <property type="project" value="UniProtKB-SubCell"/>
</dbReference>
<dbReference type="GO" id="GO:0016597">
    <property type="term" value="F:amino acid binding"/>
    <property type="evidence" value="ECO:0007669"/>
    <property type="project" value="InterPro"/>
</dbReference>
<dbReference type="GO" id="GO:0004585">
    <property type="term" value="F:ornithine carbamoyltransferase activity"/>
    <property type="evidence" value="ECO:0007669"/>
    <property type="project" value="UniProtKB-UniRule"/>
</dbReference>
<dbReference type="GO" id="GO:0042450">
    <property type="term" value="P:arginine biosynthetic process via ornithine"/>
    <property type="evidence" value="ECO:0007669"/>
    <property type="project" value="TreeGrafter"/>
</dbReference>
<dbReference type="GO" id="GO:0019240">
    <property type="term" value="P:citrulline biosynthetic process"/>
    <property type="evidence" value="ECO:0007669"/>
    <property type="project" value="TreeGrafter"/>
</dbReference>
<dbReference type="GO" id="GO:0006526">
    <property type="term" value="P:L-arginine biosynthetic process"/>
    <property type="evidence" value="ECO:0007669"/>
    <property type="project" value="UniProtKB-UniRule"/>
</dbReference>
<dbReference type="FunFam" id="3.40.50.1370:FF:000008">
    <property type="entry name" value="Ornithine carbamoyltransferase"/>
    <property type="match status" value="1"/>
</dbReference>
<dbReference type="Gene3D" id="3.40.50.1370">
    <property type="entry name" value="Aspartate/ornithine carbamoyltransferase"/>
    <property type="match status" value="2"/>
</dbReference>
<dbReference type="HAMAP" id="MF_01109">
    <property type="entry name" value="OTCase"/>
    <property type="match status" value="1"/>
</dbReference>
<dbReference type="InterPro" id="IPR006132">
    <property type="entry name" value="Asp/Orn_carbamoyltranf_P-bd"/>
</dbReference>
<dbReference type="InterPro" id="IPR006130">
    <property type="entry name" value="Asp/Orn_carbamoylTrfase"/>
</dbReference>
<dbReference type="InterPro" id="IPR036901">
    <property type="entry name" value="Asp/Orn_carbamoylTrfase_sf"/>
</dbReference>
<dbReference type="InterPro" id="IPR006131">
    <property type="entry name" value="Asp_carbamoyltransf_Asp/Orn-bd"/>
</dbReference>
<dbReference type="InterPro" id="IPR002292">
    <property type="entry name" value="Orn/put_carbamltrans"/>
</dbReference>
<dbReference type="InterPro" id="IPR024904">
    <property type="entry name" value="OTCase_ArgI"/>
</dbReference>
<dbReference type="NCBIfam" id="TIGR00658">
    <property type="entry name" value="orni_carb_tr"/>
    <property type="match status" value="1"/>
</dbReference>
<dbReference type="NCBIfam" id="NF001986">
    <property type="entry name" value="PRK00779.1"/>
    <property type="match status" value="1"/>
</dbReference>
<dbReference type="PANTHER" id="PTHR45753">
    <property type="entry name" value="ORNITHINE CARBAMOYLTRANSFERASE, MITOCHONDRIAL"/>
    <property type="match status" value="1"/>
</dbReference>
<dbReference type="PANTHER" id="PTHR45753:SF3">
    <property type="entry name" value="ORNITHINE TRANSCARBAMYLASE, MITOCHONDRIAL"/>
    <property type="match status" value="1"/>
</dbReference>
<dbReference type="Pfam" id="PF00185">
    <property type="entry name" value="OTCace"/>
    <property type="match status" value="1"/>
</dbReference>
<dbReference type="Pfam" id="PF02729">
    <property type="entry name" value="OTCace_N"/>
    <property type="match status" value="1"/>
</dbReference>
<dbReference type="PRINTS" id="PR00100">
    <property type="entry name" value="AOTCASE"/>
</dbReference>
<dbReference type="PRINTS" id="PR00102">
    <property type="entry name" value="OTCASE"/>
</dbReference>
<dbReference type="SUPFAM" id="SSF53671">
    <property type="entry name" value="Aspartate/ornithine carbamoyltransferase"/>
    <property type="match status" value="1"/>
</dbReference>
<dbReference type="PROSITE" id="PS00097">
    <property type="entry name" value="CARBAMOYLTRANSFERASE"/>
    <property type="match status" value="1"/>
</dbReference>
<keyword id="KW-0028">Amino-acid biosynthesis</keyword>
<keyword id="KW-0055">Arginine biosynthesis</keyword>
<keyword id="KW-0963">Cytoplasm</keyword>
<keyword id="KW-1185">Reference proteome</keyword>
<keyword id="KW-0808">Transferase</keyword>
<sequence length="310" mass="34016">MTTLKGRDFISLHDWSRDELEEVLELAMWQKARLKAGIRDEPLKGKQLGMYFAKPSTRTRLSFEVGIRQLGGDALFLSAHDLQLQRGESIADTARVMSRFLDGIMIRTFSHREVVELAEWATIPVINGLTDEEHPCQVVADLLTALERFGTLPGLKLAYVGDGNNVAHSLMDGGAKFGMHVVVASPEGYQPDPARVARAQVTAARYGGLVEVVTDPVLAVTGAQIVYTDVWASMGQEAEAEQRRKAFAGYQVTAELMRCAAPEAIFMHCLPAHRGEEVAAEVIDGPQSAVFDEAENRLHAQKAIMTLIMA</sequence>
<protein>
    <recommendedName>
        <fullName evidence="2">Ornithine carbamoyltransferase</fullName>
        <shortName evidence="2">OTCase</shortName>
        <ecNumber evidence="2">2.1.3.3</ecNumber>
    </recommendedName>
</protein>
<comment type="function">
    <text evidence="1">Reversibly catalyzes the transfer of the carbamoyl group from carbamoyl phosphate (CP) to the N(epsilon) atom of ornithine (ORN) to produce L-citrulline.</text>
</comment>
<comment type="catalytic activity">
    <reaction evidence="2">
        <text>carbamoyl phosphate + L-ornithine = L-citrulline + phosphate + H(+)</text>
        <dbReference type="Rhea" id="RHEA:19513"/>
        <dbReference type="ChEBI" id="CHEBI:15378"/>
        <dbReference type="ChEBI" id="CHEBI:43474"/>
        <dbReference type="ChEBI" id="CHEBI:46911"/>
        <dbReference type="ChEBI" id="CHEBI:57743"/>
        <dbReference type="ChEBI" id="CHEBI:58228"/>
        <dbReference type="EC" id="2.1.3.3"/>
    </reaction>
</comment>
<comment type="pathway">
    <text evidence="2">Amino-acid biosynthesis; L-arginine biosynthesis; L-arginine from L-ornithine and carbamoyl phosphate: step 1/3.</text>
</comment>
<comment type="subcellular location">
    <subcellularLocation>
        <location evidence="2">Cytoplasm</location>
    </subcellularLocation>
</comment>
<comment type="similarity">
    <text evidence="2">Belongs to the aspartate/ornithine carbamoyltransferase superfamily. OTCase family.</text>
</comment>
<reference key="1">
    <citation type="journal article" date="2004" name="Nucleic Acids Res.">
        <title>Genome sequence of Symbiobacterium thermophilum, an uncultivable bacterium that depends on microbial commensalism.</title>
        <authorList>
            <person name="Ueda K."/>
            <person name="Yamashita A."/>
            <person name="Ishikawa J."/>
            <person name="Shimada M."/>
            <person name="Watsuji T."/>
            <person name="Morimura K."/>
            <person name="Ikeda H."/>
            <person name="Hattori M."/>
            <person name="Beppu T."/>
        </authorList>
    </citation>
    <scope>NUCLEOTIDE SEQUENCE [LARGE SCALE GENOMIC DNA]</scope>
    <source>
        <strain>DSM 24528 / JCM 14929 / IAM 14863 / T</strain>
    </source>
</reference>